<comment type="function">
    <text evidence="1 7">Probable transcription factor (By similarity). Seems to promote cell differentiation (PubMed:25564655).</text>
</comment>
<comment type="subunit">
    <text evidence="7">Interacts with AIL7/PLT7, ANT, BBM and AIL1.</text>
</comment>
<comment type="subcellular location">
    <subcellularLocation>
        <location evidence="3 8">Nucleus</location>
    </subcellularLocation>
</comment>
<comment type="tissue specificity">
    <text evidence="6 8">Expressed in siliques.</text>
</comment>
<comment type="disruption phenotype">
    <text evidence="7">In plants missing HDG3, HDG7, HDG11, PDF2 and ATML1, increased cell division leading to cell overproliferation.</text>
</comment>
<comment type="similarity">
    <text evidence="12">Belongs to the HD-ZIP homeobox family. Class IV subfamily.</text>
</comment>
<comment type="sequence caution" evidence="12">
    <conflict type="erroneous gene model prediction">
        <sequence resource="EMBL-CDS" id="AAC69941"/>
    </conflict>
</comment>
<dbReference type="EMBL" id="EF988635">
    <property type="protein sequence ID" value="ABS18315.1"/>
    <property type="molecule type" value="mRNA"/>
</dbReference>
<dbReference type="EMBL" id="AC005700">
    <property type="protein sequence ID" value="AAC69941.1"/>
    <property type="status" value="ALT_SEQ"/>
    <property type="molecule type" value="Genomic_DNA"/>
</dbReference>
<dbReference type="EMBL" id="CP002685">
    <property type="protein sequence ID" value="AEC08674.1"/>
    <property type="molecule type" value="Genomic_DNA"/>
</dbReference>
<dbReference type="PIR" id="C84732">
    <property type="entry name" value="C84732"/>
</dbReference>
<dbReference type="RefSeq" id="NP_180796.2">
    <property type="nucleotide sequence ID" value="NM_128796.3"/>
</dbReference>
<dbReference type="STRING" id="3702.Q9ZV65"/>
<dbReference type="PaxDb" id="3702-AT2G32370.1"/>
<dbReference type="ProteomicsDB" id="247171"/>
<dbReference type="EnsemblPlants" id="AT2G32370.1">
    <property type="protein sequence ID" value="AT2G32370.1"/>
    <property type="gene ID" value="AT2G32370"/>
</dbReference>
<dbReference type="GeneID" id="817798"/>
<dbReference type="Gramene" id="AT2G32370.1">
    <property type="protein sequence ID" value="AT2G32370.1"/>
    <property type="gene ID" value="AT2G32370"/>
</dbReference>
<dbReference type="KEGG" id="ath:AT2G32370"/>
<dbReference type="Araport" id="AT2G32370"/>
<dbReference type="TAIR" id="AT2G32370">
    <property type="gene designation" value="HDG3"/>
</dbReference>
<dbReference type="eggNOG" id="ENOG502QU3P">
    <property type="taxonomic scope" value="Eukaryota"/>
</dbReference>
<dbReference type="HOGENOM" id="CLU_015002_2_1_1"/>
<dbReference type="InParanoid" id="Q9ZV65"/>
<dbReference type="OMA" id="ANNRTNW"/>
<dbReference type="OrthoDB" id="6159439at2759"/>
<dbReference type="PhylomeDB" id="Q9ZV65"/>
<dbReference type="PRO" id="PR:Q9ZV65"/>
<dbReference type="Proteomes" id="UP000006548">
    <property type="component" value="Chromosome 2"/>
</dbReference>
<dbReference type="ExpressionAtlas" id="Q9ZV65">
    <property type="expression patterns" value="baseline and differential"/>
</dbReference>
<dbReference type="GO" id="GO:0005634">
    <property type="term" value="C:nucleus"/>
    <property type="evidence" value="ECO:0007669"/>
    <property type="project" value="UniProtKB-SubCell"/>
</dbReference>
<dbReference type="GO" id="GO:0003677">
    <property type="term" value="F:DNA binding"/>
    <property type="evidence" value="ECO:0007669"/>
    <property type="project" value="UniProtKB-KW"/>
</dbReference>
<dbReference type="GO" id="GO:0003700">
    <property type="term" value="F:DNA-binding transcription factor activity"/>
    <property type="evidence" value="ECO:0000250"/>
    <property type="project" value="TAIR"/>
</dbReference>
<dbReference type="GO" id="GO:0000981">
    <property type="term" value="F:DNA-binding transcription factor activity, RNA polymerase II-specific"/>
    <property type="evidence" value="ECO:0007669"/>
    <property type="project" value="InterPro"/>
</dbReference>
<dbReference type="GO" id="GO:0008289">
    <property type="term" value="F:lipid binding"/>
    <property type="evidence" value="ECO:0007669"/>
    <property type="project" value="InterPro"/>
</dbReference>
<dbReference type="GO" id="GO:0030154">
    <property type="term" value="P:cell differentiation"/>
    <property type="evidence" value="ECO:0000315"/>
    <property type="project" value="UniProtKB"/>
</dbReference>
<dbReference type="GO" id="GO:0048825">
    <property type="term" value="P:cotyledon development"/>
    <property type="evidence" value="ECO:0000316"/>
    <property type="project" value="TAIR"/>
</dbReference>
<dbReference type="CDD" id="cd00086">
    <property type="entry name" value="homeodomain"/>
    <property type="match status" value="1"/>
</dbReference>
<dbReference type="CDD" id="cd08875">
    <property type="entry name" value="START_ArGLABRA2_like"/>
    <property type="match status" value="1"/>
</dbReference>
<dbReference type="FunFam" id="1.10.10.60:FF:000229">
    <property type="entry name" value="Homeobox-leucine zipper protein HDG1"/>
    <property type="match status" value="1"/>
</dbReference>
<dbReference type="Gene3D" id="3.30.530.20">
    <property type="match status" value="1"/>
</dbReference>
<dbReference type="Gene3D" id="1.10.10.60">
    <property type="entry name" value="Homeodomain-like"/>
    <property type="match status" value="1"/>
</dbReference>
<dbReference type="InterPro" id="IPR042160">
    <property type="entry name" value="GLABRA2/ANL2/PDF2/ATML1-like"/>
</dbReference>
<dbReference type="InterPro" id="IPR001356">
    <property type="entry name" value="HD"/>
</dbReference>
<dbReference type="InterPro" id="IPR017970">
    <property type="entry name" value="Homeobox_CS"/>
</dbReference>
<dbReference type="InterPro" id="IPR009057">
    <property type="entry name" value="Homeodomain-like_sf"/>
</dbReference>
<dbReference type="InterPro" id="IPR023393">
    <property type="entry name" value="START-like_dom_sf"/>
</dbReference>
<dbReference type="InterPro" id="IPR002913">
    <property type="entry name" value="START_lipid-bd_dom"/>
</dbReference>
<dbReference type="PANTHER" id="PTHR45654:SF93">
    <property type="entry name" value="HOMEOBOX-LEUCINE ZIPPER PROTEIN HDG2-RELATED"/>
    <property type="match status" value="1"/>
</dbReference>
<dbReference type="PANTHER" id="PTHR45654">
    <property type="entry name" value="HOMEOBOX-LEUCINE ZIPPER PROTEIN MERISTEM L1"/>
    <property type="match status" value="1"/>
</dbReference>
<dbReference type="Pfam" id="PF00046">
    <property type="entry name" value="Homeodomain"/>
    <property type="match status" value="1"/>
</dbReference>
<dbReference type="Pfam" id="PF01852">
    <property type="entry name" value="START"/>
    <property type="match status" value="1"/>
</dbReference>
<dbReference type="SMART" id="SM00389">
    <property type="entry name" value="HOX"/>
    <property type="match status" value="1"/>
</dbReference>
<dbReference type="SMART" id="SM00234">
    <property type="entry name" value="START"/>
    <property type="match status" value="1"/>
</dbReference>
<dbReference type="SUPFAM" id="SSF55961">
    <property type="entry name" value="Bet v1-like"/>
    <property type="match status" value="2"/>
</dbReference>
<dbReference type="SUPFAM" id="SSF46689">
    <property type="entry name" value="Homeodomain-like"/>
    <property type="match status" value="1"/>
</dbReference>
<dbReference type="PROSITE" id="PS00027">
    <property type="entry name" value="HOMEOBOX_1"/>
    <property type="match status" value="1"/>
</dbReference>
<dbReference type="PROSITE" id="PS50071">
    <property type="entry name" value="HOMEOBOX_2"/>
    <property type="match status" value="1"/>
</dbReference>
<dbReference type="PROSITE" id="PS50848">
    <property type="entry name" value="START"/>
    <property type="match status" value="1"/>
</dbReference>
<name>HDG3_ARATH</name>
<keyword id="KW-0175">Coiled coil</keyword>
<keyword id="KW-0238">DNA-binding</keyword>
<keyword id="KW-0371">Homeobox</keyword>
<keyword id="KW-0539">Nucleus</keyword>
<keyword id="KW-1185">Reference proteome</keyword>
<keyword id="KW-0804">Transcription</keyword>
<keyword id="KW-0805">Transcription regulation</keyword>
<gene>
    <name evidence="10" type="primary">HDG3</name>
    <name evidence="9" type="synonym">HDGL2-3</name>
    <name evidence="11" type="synonym">UCL1</name>
    <name evidence="13" type="ordered locus">At2g32370</name>
    <name evidence="14" type="ORF">T32F6.11</name>
</gene>
<proteinExistence type="evidence at protein level"/>
<sequence length="725" mass="80070">MSQSNMVPVANNGDNNNDNENNNNNNNNGGTDNTNAGNDSGDQDFDSGNTSSGNHGEGLGNNQAPRHKKKKYNRHTQLQISEMEAFFRECPHPDDKQRYDLSAQLGLDPVQIKFWFQNKRTQNKNQQERFENSELRNLNNHLRSENQRLREAIHQALCPKCGGQTAIGEMTFEEHHLRILNARLTEEIKQLSVTAEKISRLTGIPVRSHPRVSPPNPPPNFEFGMGSKGNVGNHSRETTGPADANTKPIIMELAFGAMEELLVMAQVAEPLWMGGFNGTSLALNLDEYEKTFRTGLGPRLGGFRTEASRETALVAMCPTGIVEMLMQENLWSTMFAGIVGRARTHEQIMADAAGNFNGNLQIMSAEYQVLSPLVTTRESYFVRYCKQQGEGLWAVVDISIDHLLPNINLKCRRRPSGCLIQEMHSGYSKVTWVEHVEVDDAGSYSIFEKLICTGQAFAANRWVGTLVRQCERISSILSTDFQSVDSGDHITLTNHGKMSMLKIAERIARTFFAGMTNATGSTIFSGVEGEDIRVMTMKSVNDPGKPPGVIICAATSFWLPAPPNTVFDFLREATHRHNWDVLCNGEMMHKIAEITNGIDKRNCASLLRHGHTSKSKMMIVQETSTDPTASFVLYAPVDMTSMDITLHGGGDPDFVVILPSGFAIFPDGTGKPGGKEGGSLLTISFQMLVESGPEARLSVSSVATTENLIRTTVRRIKDLFPCQTA</sequence>
<accession>Q9ZV65</accession>
<accession>A7LBA8</accession>
<evidence type="ECO:0000250" key="1">
    <source>
        <dbReference type="UniProtKB" id="Q9LTK3"/>
    </source>
</evidence>
<evidence type="ECO:0000255" key="2"/>
<evidence type="ECO:0000255" key="3">
    <source>
        <dbReference type="PROSITE-ProRule" id="PRU00108"/>
    </source>
</evidence>
<evidence type="ECO:0000255" key="4">
    <source>
        <dbReference type="PROSITE-ProRule" id="PRU00197"/>
    </source>
</evidence>
<evidence type="ECO:0000256" key="5">
    <source>
        <dbReference type="SAM" id="MobiDB-lite"/>
    </source>
</evidence>
<evidence type="ECO:0000269" key="6">
    <source>
    </source>
</evidence>
<evidence type="ECO:0000269" key="7">
    <source>
    </source>
</evidence>
<evidence type="ECO:0000269" key="8">
    <source ref="1"/>
</evidence>
<evidence type="ECO:0000303" key="9">
    <source>
    </source>
</evidence>
<evidence type="ECO:0000303" key="10">
    <source>
    </source>
</evidence>
<evidence type="ECO:0000303" key="11">
    <source ref="1"/>
</evidence>
<evidence type="ECO:0000305" key="12"/>
<evidence type="ECO:0000312" key="13">
    <source>
        <dbReference type="Araport" id="AT2G32370"/>
    </source>
</evidence>
<evidence type="ECO:0000312" key="14">
    <source>
        <dbReference type="EMBL" id="AAC69941.1"/>
    </source>
</evidence>
<feature type="chain" id="PRO_0000331665" description="Homeobox-leucine zipper protein HDG3">
    <location>
        <begin position="1"/>
        <end position="725"/>
    </location>
</feature>
<feature type="domain" description="START" evidence="4">
    <location>
        <begin position="243"/>
        <end position="475"/>
    </location>
</feature>
<feature type="DNA-binding region" description="Homeobox" evidence="3">
    <location>
        <begin position="68"/>
        <end position="127"/>
    </location>
</feature>
<feature type="region of interest" description="Disordered" evidence="5">
    <location>
        <begin position="1"/>
        <end position="74"/>
    </location>
</feature>
<feature type="coiled-coil region" evidence="2">
    <location>
        <begin position="117"/>
        <end position="201"/>
    </location>
</feature>
<feature type="compositionally biased region" description="Low complexity" evidence="5">
    <location>
        <begin position="11"/>
        <end position="40"/>
    </location>
</feature>
<feature type="compositionally biased region" description="Polar residues" evidence="5">
    <location>
        <begin position="46"/>
        <end position="64"/>
    </location>
</feature>
<feature type="compositionally biased region" description="Basic residues" evidence="5">
    <location>
        <begin position="65"/>
        <end position="74"/>
    </location>
</feature>
<organism>
    <name type="scientific">Arabidopsis thaliana</name>
    <name type="common">Mouse-ear cress</name>
    <dbReference type="NCBI Taxonomy" id="3702"/>
    <lineage>
        <taxon>Eukaryota</taxon>
        <taxon>Viridiplantae</taxon>
        <taxon>Streptophyta</taxon>
        <taxon>Embryophyta</taxon>
        <taxon>Tracheophyta</taxon>
        <taxon>Spermatophyta</taxon>
        <taxon>Magnoliopsida</taxon>
        <taxon>eudicotyledons</taxon>
        <taxon>Gunneridae</taxon>
        <taxon>Pentapetalae</taxon>
        <taxon>rosids</taxon>
        <taxon>malvids</taxon>
        <taxon>Brassicales</taxon>
        <taxon>Brassicaceae</taxon>
        <taxon>Camelineae</taxon>
        <taxon>Arabidopsis</taxon>
    </lineage>
</organism>
<protein>
    <recommendedName>
        <fullName evidence="10">Homeobox-leucine zipper protein HDG3</fullName>
    </recommendedName>
    <alternativeName>
        <fullName evidence="10">HD-ZIP protein HDG3</fullName>
    </alternativeName>
    <alternativeName>
        <fullName evidence="9">Homeodomain GLABRA 2-like protein 3</fullName>
    </alternativeName>
    <alternativeName>
        <fullName evidence="10">Homeodomain transcription factor HDG3</fullName>
    </alternativeName>
    <alternativeName>
        <fullName evidence="10">Protein HOMEODOMAIN GLABROUS 3</fullName>
    </alternativeName>
    <alternativeName>
        <fullName evidence="11">Protein UPCURVED LEAF 1</fullName>
    </alternativeName>
</protein>
<reference key="1">
    <citation type="journal article" date="2007" name="Plant Sci.">
        <title>The effects of increased expression of an Arabidopsis HD-ZIP gene on leaf morphogenesis and anther dehiscence.</title>
        <authorList>
            <person name="Li Q.-J."/>
            <person name="Xu B."/>
            <person name="Chen X.-Y."/>
            <person name="Wang L.-J."/>
        </authorList>
        <dbReference type="AGRICOLA" id="IND43961341"/>
    </citation>
    <scope>NUCLEOTIDE SEQUENCE [MRNA]</scope>
    <scope>SUBCELLULAR LOCATION</scope>
    <scope>TISSUE SPECIFICITY</scope>
    <source>
        <strain>cv. Columbia</strain>
    </source>
</reference>
<reference key="2">
    <citation type="journal article" date="1999" name="Nature">
        <title>Sequence and analysis of chromosome 2 of the plant Arabidopsis thaliana.</title>
        <authorList>
            <person name="Lin X."/>
            <person name="Kaul S."/>
            <person name="Rounsley S.D."/>
            <person name="Shea T.P."/>
            <person name="Benito M.-I."/>
            <person name="Town C.D."/>
            <person name="Fujii C.Y."/>
            <person name="Mason T.M."/>
            <person name="Bowman C.L."/>
            <person name="Barnstead M.E."/>
            <person name="Feldblyum T.V."/>
            <person name="Buell C.R."/>
            <person name="Ketchum K.A."/>
            <person name="Lee J.J."/>
            <person name="Ronning C.M."/>
            <person name="Koo H.L."/>
            <person name="Moffat K.S."/>
            <person name="Cronin L.A."/>
            <person name="Shen M."/>
            <person name="Pai G."/>
            <person name="Van Aken S."/>
            <person name="Umayam L."/>
            <person name="Tallon L.J."/>
            <person name="Gill J.E."/>
            <person name="Adams M.D."/>
            <person name="Carrera A.J."/>
            <person name="Creasy T.H."/>
            <person name="Goodman H.M."/>
            <person name="Somerville C.R."/>
            <person name="Copenhaver G.P."/>
            <person name="Preuss D."/>
            <person name="Nierman W.C."/>
            <person name="White O."/>
            <person name="Eisen J.A."/>
            <person name="Salzberg S.L."/>
            <person name="Fraser C.M."/>
            <person name="Venter J.C."/>
        </authorList>
    </citation>
    <scope>NUCLEOTIDE SEQUENCE [LARGE SCALE GENOMIC DNA]</scope>
    <source>
        <strain>cv. Columbia</strain>
    </source>
</reference>
<reference key="3">
    <citation type="journal article" date="2017" name="Plant J.">
        <title>Araport11: a complete reannotation of the Arabidopsis thaliana reference genome.</title>
        <authorList>
            <person name="Cheng C.Y."/>
            <person name="Krishnakumar V."/>
            <person name="Chan A.P."/>
            <person name="Thibaud-Nissen F."/>
            <person name="Schobel S."/>
            <person name="Town C.D."/>
        </authorList>
    </citation>
    <scope>GENOME REANNOTATION</scope>
    <source>
        <strain>cv. Columbia</strain>
    </source>
</reference>
<reference key="4">
    <citation type="journal article" date="2000" name="Plant Mol. Biol.">
        <title>Organization and structural evolution of four multigene families in Arabidopsis thaliana: AtLCAD, AtLGT, AtMYST and AtHD-GL2.</title>
        <authorList>
            <person name="Tavares R."/>
            <person name="Aubourg S."/>
            <person name="Lecharny A."/>
            <person name="Kreis M."/>
        </authorList>
    </citation>
    <scope>GENE FAMILY</scope>
</reference>
<reference key="5">
    <citation type="journal article" date="2006" name="Plant Physiol.">
        <title>Characterization of the class IV homeodomain-leucine zipper gene family in Arabidopsis.</title>
        <authorList>
            <person name="Nakamura M."/>
            <person name="Katsumata H."/>
            <person name="Abe M."/>
            <person name="Yabe N."/>
            <person name="Komeda Y."/>
            <person name="Yamamoto K.T."/>
            <person name="Takahashi T."/>
        </authorList>
    </citation>
    <scope>TISSUE SPECIFICITY</scope>
    <scope>GENE FAMILY</scope>
    <scope>NOMENCLATURE</scope>
</reference>
<reference key="6">
    <citation type="journal article" date="2015" name="Development">
        <title>AIL and HDG proteins act antagonistically to control cell proliferation.</title>
        <authorList>
            <person name="Horstman A."/>
            <person name="Fukuoka H."/>
            <person name="Muino J.M."/>
            <person name="Nitsch L."/>
            <person name="Guo C."/>
            <person name="Passarinho P."/>
            <person name="Sanchez-Perez G."/>
            <person name="Immink R."/>
            <person name="Angenent G."/>
            <person name="Boutilier K."/>
        </authorList>
    </citation>
    <scope>FUNCTION</scope>
    <scope>DISRUPTION PHENOTYPE</scope>
    <scope>INTERACTION WITH AIL7/PLT7; ANT; BBM AND AIL1</scope>
    <source>
        <strain>cv. Columbia</strain>
    </source>
</reference>